<proteinExistence type="inferred from homology"/>
<protein>
    <recommendedName>
        <fullName evidence="1">4-hydroxythreonine-4-phosphate dehydrogenase</fullName>
        <ecNumber evidence="1">1.1.1.262</ecNumber>
    </recommendedName>
    <alternativeName>
        <fullName evidence="1">4-(phosphohydroxy)-L-threonine dehydrogenase</fullName>
    </alternativeName>
</protein>
<evidence type="ECO:0000255" key="1">
    <source>
        <dbReference type="HAMAP-Rule" id="MF_00536"/>
    </source>
</evidence>
<reference key="1">
    <citation type="submission" date="2008-05" db="EMBL/GenBank/DDBJ databases">
        <title>Complete sequence of Shigella boydii serotype 18 strain BS512.</title>
        <authorList>
            <person name="Rasko D.A."/>
            <person name="Rosovitz M."/>
            <person name="Maurelli A.T."/>
            <person name="Myers G."/>
            <person name="Seshadri R."/>
            <person name="Cer R."/>
            <person name="Jiang L."/>
            <person name="Ravel J."/>
            <person name="Sebastian Y."/>
        </authorList>
    </citation>
    <scope>NUCLEOTIDE SEQUENCE [LARGE SCALE GENOMIC DNA]</scope>
    <source>
        <strain>CDC 3083-94 / BS512</strain>
    </source>
</reference>
<keyword id="KW-0170">Cobalt</keyword>
<keyword id="KW-0963">Cytoplasm</keyword>
<keyword id="KW-0460">Magnesium</keyword>
<keyword id="KW-0479">Metal-binding</keyword>
<keyword id="KW-0520">NAD</keyword>
<keyword id="KW-0521">NADP</keyword>
<keyword id="KW-0560">Oxidoreductase</keyword>
<keyword id="KW-0664">Pyridoxine biosynthesis</keyword>
<keyword id="KW-1185">Reference proteome</keyword>
<keyword id="KW-0862">Zinc</keyword>
<accession>B2U260</accession>
<gene>
    <name evidence="1" type="primary">pdxA</name>
    <name type="ordered locus">SbBS512_E0046</name>
</gene>
<feature type="chain" id="PRO_1000128262" description="4-hydroxythreonine-4-phosphate dehydrogenase">
    <location>
        <begin position="1"/>
        <end position="329"/>
    </location>
</feature>
<feature type="binding site" evidence="1">
    <location>
        <position position="136"/>
    </location>
    <ligand>
        <name>substrate</name>
    </ligand>
</feature>
<feature type="binding site" evidence="1">
    <location>
        <position position="137"/>
    </location>
    <ligand>
        <name>substrate</name>
    </ligand>
</feature>
<feature type="binding site" evidence="1">
    <location>
        <position position="166"/>
    </location>
    <ligand>
        <name>a divalent metal cation</name>
        <dbReference type="ChEBI" id="CHEBI:60240"/>
        <note>ligand shared between dimeric partners</note>
    </ligand>
</feature>
<feature type="binding site" evidence="1">
    <location>
        <position position="211"/>
    </location>
    <ligand>
        <name>a divalent metal cation</name>
        <dbReference type="ChEBI" id="CHEBI:60240"/>
        <note>ligand shared between dimeric partners</note>
    </ligand>
</feature>
<feature type="binding site" evidence="1">
    <location>
        <position position="266"/>
    </location>
    <ligand>
        <name>a divalent metal cation</name>
        <dbReference type="ChEBI" id="CHEBI:60240"/>
        <note>ligand shared between dimeric partners</note>
    </ligand>
</feature>
<feature type="binding site" evidence="1">
    <location>
        <position position="274"/>
    </location>
    <ligand>
        <name>substrate</name>
    </ligand>
</feature>
<feature type="binding site" evidence="1">
    <location>
        <position position="283"/>
    </location>
    <ligand>
        <name>substrate</name>
    </ligand>
</feature>
<feature type="binding site" evidence="1">
    <location>
        <position position="292"/>
    </location>
    <ligand>
        <name>substrate</name>
    </ligand>
</feature>
<name>PDXA_SHIB3</name>
<sequence>MVKTQRVVITPGEPAGIGPDLVVQLAQREWPVELVVCADATLLTDRAAMLGLPLTLRPYSPNSPAQPQTAGTLTLLPVALRESVTAGQLAIENGHYVVETLARACDGCLNGEFAALITGPVHKGVINDAGIPFTGHTEFFEERSQAKKVVMMLATEELRVALATTHLPLRDIADAITPALLHEVIAILHHDLRTKFGIAEPRILVCGLNPHAGEGGHMGTEEIDTIIPVLDELRAQGMKLNGPLPADTLFQPKYLDNADAVLAMYHDQGLPVLKYQGFGRGVNITLGLPFIRTSVDHGTALELAGRGEADVGSFITALNLAIKMIVNTQ</sequence>
<organism>
    <name type="scientific">Shigella boydii serotype 18 (strain CDC 3083-94 / BS512)</name>
    <dbReference type="NCBI Taxonomy" id="344609"/>
    <lineage>
        <taxon>Bacteria</taxon>
        <taxon>Pseudomonadati</taxon>
        <taxon>Pseudomonadota</taxon>
        <taxon>Gammaproteobacteria</taxon>
        <taxon>Enterobacterales</taxon>
        <taxon>Enterobacteriaceae</taxon>
        <taxon>Shigella</taxon>
    </lineage>
</organism>
<comment type="function">
    <text evidence="1">Catalyzes the NAD(P)-dependent oxidation of 4-(phosphooxy)-L-threonine (HTP) into 2-amino-3-oxo-4-(phosphooxy)butyric acid which spontaneously decarboxylates to form 3-amino-2-oxopropyl phosphate (AHAP).</text>
</comment>
<comment type="catalytic activity">
    <reaction evidence="1">
        <text>4-(phosphooxy)-L-threonine + NAD(+) = 3-amino-2-oxopropyl phosphate + CO2 + NADH</text>
        <dbReference type="Rhea" id="RHEA:32275"/>
        <dbReference type="ChEBI" id="CHEBI:16526"/>
        <dbReference type="ChEBI" id="CHEBI:57279"/>
        <dbReference type="ChEBI" id="CHEBI:57540"/>
        <dbReference type="ChEBI" id="CHEBI:57945"/>
        <dbReference type="ChEBI" id="CHEBI:58452"/>
        <dbReference type="EC" id="1.1.1.262"/>
    </reaction>
</comment>
<comment type="cofactor">
    <cofactor evidence="1">
        <name>Zn(2+)</name>
        <dbReference type="ChEBI" id="CHEBI:29105"/>
    </cofactor>
    <cofactor evidence="1">
        <name>Mg(2+)</name>
        <dbReference type="ChEBI" id="CHEBI:18420"/>
    </cofactor>
    <cofactor evidence="1">
        <name>Co(2+)</name>
        <dbReference type="ChEBI" id="CHEBI:48828"/>
    </cofactor>
    <text evidence="1">Binds 1 divalent metal cation per subunit. Can use ions such as Zn(2+), Mg(2+) or Co(2+).</text>
</comment>
<comment type="pathway">
    <text evidence="1">Cofactor biosynthesis; pyridoxine 5'-phosphate biosynthesis; pyridoxine 5'-phosphate from D-erythrose 4-phosphate: step 4/5.</text>
</comment>
<comment type="subunit">
    <text evidence="1">Homodimer.</text>
</comment>
<comment type="subcellular location">
    <subcellularLocation>
        <location evidence="1">Cytoplasm</location>
    </subcellularLocation>
</comment>
<comment type="miscellaneous">
    <text evidence="1">The active site is located at the dimer interface.</text>
</comment>
<comment type="similarity">
    <text evidence="1">Belongs to the PdxA family.</text>
</comment>
<dbReference type="EC" id="1.1.1.262" evidence="1"/>
<dbReference type="EMBL" id="CP001063">
    <property type="protein sequence ID" value="ACD10346.1"/>
    <property type="molecule type" value="Genomic_DNA"/>
</dbReference>
<dbReference type="RefSeq" id="WP_000241244.1">
    <property type="nucleotide sequence ID" value="NC_010658.1"/>
</dbReference>
<dbReference type="SMR" id="B2U260"/>
<dbReference type="STRING" id="344609.SbBS512_E0046"/>
<dbReference type="KEGG" id="sbc:SbBS512_E0046"/>
<dbReference type="HOGENOM" id="CLU_040168_1_0_6"/>
<dbReference type="UniPathway" id="UPA00244">
    <property type="reaction ID" value="UER00312"/>
</dbReference>
<dbReference type="Proteomes" id="UP000001030">
    <property type="component" value="Chromosome"/>
</dbReference>
<dbReference type="GO" id="GO:0005737">
    <property type="term" value="C:cytoplasm"/>
    <property type="evidence" value="ECO:0007669"/>
    <property type="project" value="UniProtKB-SubCell"/>
</dbReference>
<dbReference type="GO" id="GO:0050570">
    <property type="term" value="F:4-hydroxythreonine-4-phosphate dehydrogenase activity"/>
    <property type="evidence" value="ECO:0007669"/>
    <property type="project" value="UniProtKB-UniRule"/>
</dbReference>
<dbReference type="GO" id="GO:0050897">
    <property type="term" value="F:cobalt ion binding"/>
    <property type="evidence" value="ECO:0007669"/>
    <property type="project" value="UniProtKB-UniRule"/>
</dbReference>
<dbReference type="GO" id="GO:0000287">
    <property type="term" value="F:magnesium ion binding"/>
    <property type="evidence" value="ECO:0007669"/>
    <property type="project" value="UniProtKB-UniRule"/>
</dbReference>
<dbReference type="GO" id="GO:0051287">
    <property type="term" value="F:NAD binding"/>
    <property type="evidence" value="ECO:0007669"/>
    <property type="project" value="InterPro"/>
</dbReference>
<dbReference type="GO" id="GO:0008270">
    <property type="term" value="F:zinc ion binding"/>
    <property type="evidence" value="ECO:0007669"/>
    <property type="project" value="UniProtKB-UniRule"/>
</dbReference>
<dbReference type="GO" id="GO:0042823">
    <property type="term" value="P:pyridoxal phosphate biosynthetic process"/>
    <property type="evidence" value="ECO:0007669"/>
    <property type="project" value="UniProtKB-UniRule"/>
</dbReference>
<dbReference type="GO" id="GO:0008615">
    <property type="term" value="P:pyridoxine biosynthetic process"/>
    <property type="evidence" value="ECO:0007669"/>
    <property type="project" value="UniProtKB-UniRule"/>
</dbReference>
<dbReference type="FunFam" id="3.40.718.10:FF:000010">
    <property type="entry name" value="4-hydroxythreonine-4-phosphate dehydrogenase"/>
    <property type="match status" value="1"/>
</dbReference>
<dbReference type="Gene3D" id="3.40.718.10">
    <property type="entry name" value="Isopropylmalate Dehydrogenase"/>
    <property type="match status" value="1"/>
</dbReference>
<dbReference type="HAMAP" id="MF_00536">
    <property type="entry name" value="PdxA"/>
    <property type="match status" value="1"/>
</dbReference>
<dbReference type="InterPro" id="IPR037510">
    <property type="entry name" value="PdxA"/>
</dbReference>
<dbReference type="InterPro" id="IPR005255">
    <property type="entry name" value="PdxA_fam"/>
</dbReference>
<dbReference type="NCBIfam" id="TIGR00557">
    <property type="entry name" value="pdxA"/>
    <property type="match status" value="1"/>
</dbReference>
<dbReference type="PANTHER" id="PTHR30004">
    <property type="entry name" value="4-HYDROXYTHREONINE-4-PHOSPHATE DEHYDROGENASE"/>
    <property type="match status" value="1"/>
</dbReference>
<dbReference type="PANTHER" id="PTHR30004:SF5">
    <property type="entry name" value="4-HYDROXYTHREONINE-4-PHOSPHATE DEHYDROGENASE"/>
    <property type="match status" value="1"/>
</dbReference>
<dbReference type="Pfam" id="PF04166">
    <property type="entry name" value="PdxA"/>
    <property type="match status" value="1"/>
</dbReference>
<dbReference type="SUPFAM" id="SSF53659">
    <property type="entry name" value="Isocitrate/Isopropylmalate dehydrogenase-like"/>
    <property type="match status" value="1"/>
</dbReference>